<proteinExistence type="inferred from homology"/>
<reference key="1">
    <citation type="journal article" date="2009" name="PLoS ONE">
        <title>Genome analysis of the anaerobic thermohalophilic bacterium Halothermothrix orenii.</title>
        <authorList>
            <person name="Mavromatis K."/>
            <person name="Ivanova N."/>
            <person name="Anderson I."/>
            <person name="Lykidis A."/>
            <person name="Hooper S.D."/>
            <person name="Sun H."/>
            <person name="Kunin V."/>
            <person name="Lapidus A."/>
            <person name="Hugenholtz P."/>
            <person name="Patel B."/>
            <person name="Kyrpides N.C."/>
        </authorList>
    </citation>
    <scope>NUCLEOTIDE SEQUENCE [LARGE SCALE GENOMIC DNA]</scope>
    <source>
        <strain>H 168 / OCM 544 / DSM 9562</strain>
    </source>
</reference>
<name>RL27_HALOH</name>
<feature type="chain" id="PRO_1000146534" description="Large ribosomal subunit protein bL27">
    <location>
        <begin position="1"/>
        <end position="92"/>
    </location>
</feature>
<feature type="region of interest" description="Disordered" evidence="2">
    <location>
        <begin position="1"/>
        <end position="21"/>
    </location>
</feature>
<feature type="compositionally biased region" description="Basic and acidic residues" evidence="2">
    <location>
        <begin position="12"/>
        <end position="21"/>
    </location>
</feature>
<accession>B8CXZ1</accession>
<protein>
    <recommendedName>
        <fullName evidence="1">Large ribosomal subunit protein bL27</fullName>
    </recommendedName>
    <alternativeName>
        <fullName evidence="3">50S ribosomal protein L27</fullName>
    </alternativeName>
</protein>
<dbReference type="EMBL" id="CP001098">
    <property type="protein sequence ID" value="ACL70160.1"/>
    <property type="molecule type" value="Genomic_DNA"/>
</dbReference>
<dbReference type="RefSeq" id="WP_012636343.1">
    <property type="nucleotide sequence ID" value="NC_011899.1"/>
</dbReference>
<dbReference type="SMR" id="B8CXZ1"/>
<dbReference type="STRING" id="373903.Hore_14110"/>
<dbReference type="KEGG" id="hor:Hore_14110"/>
<dbReference type="eggNOG" id="COG0211">
    <property type="taxonomic scope" value="Bacteria"/>
</dbReference>
<dbReference type="HOGENOM" id="CLU_095424_4_0_9"/>
<dbReference type="OrthoDB" id="9803474at2"/>
<dbReference type="Proteomes" id="UP000000719">
    <property type="component" value="Chromosome"/>
</dbReference>
<dbReference type="GO" id="GO:0022625">
    <property type="term" value="C:cytosolic large ribosomal subunit"/>
    <property type="evidence" value="ECO:0007669"/>
    <property type="project" value="TreeGrafter"/>
</dbReference>
<dbReference type="GO" id="GO:0003735">
    <property type="term" value="F:structural constituent of ribosome"/>
    <property type="evidence" value="ECO:0007669"/>
    <property type="project" value="InterPro"/>
</dbReference>
<dbReference type="GO" id="GO:0006412">
    <property type="term" value="P:translation"/>
    <property type="evidence" value="ECO:0007669"/>
    <property type="project" value="UniProtKB-UniRule"/>
</dbReference>
<dbReference type="FunFam" id="2.40.50.100:FF:000004">
    <property type="entry name" value="50S ribosomal protein L27"/>
    <property type="match status" value="1"/>
</dbReference>
<dbReference type="Gene3D" id="2.40.50.100">
    <property type="match status" value="1"/>
</dbReference>
<dbReference type="HAMAP" id="MF_00539">
    <property type="entry name" value="Ribosomal_bL27"/>
    <property type="match status" value="1"/>
</dbReference>
<dbReference type="InterPro" id="IPR001684">
    <property type="entry name" value="Ribosomal_bL27"/>
</dbReference>
<dbReference type="InterPro" id="IPR018261">
    <property type="entry name" value="Ribosomal_bL27_CS"/>
</dbReference>
<dbReference type="NCBIfam" id="TIGR00062">
    <property type="entry name" value="L27"/>
    <property type="match status" value="1"/>
</dbReference>
<dbReference type="PANTHER" id="PTHR15893:SF0">
    <property type="entry name" value="LARGE RIBOSOMAL SUBUNIT PROTEIN BL27M"/>
    <property type="match status" value="1"/>
</dbReference>
<dbReference type="PANTHER" id="PTHR15893">
    <property type="entry name" value="RIBOSOMAL PROTEIN L27"/>
    <property type="match status" value="1"/>
</dbReference>
<dbReference type="Pfam" id="PF01016">
    <property type="entry name" value="Ribosomal_L27"/>
    <property type="match status" value="1"/>
</dbReference>
<dbReference type="PRINTS" id="PR00063">
    <property type="entry name" value="RIBOSOMALL27"/>
</dbReference>
<dbReference type="SUPFAM" id="SSF110324">
    <property type="entry name" value="Ribosomal L27 protein-like"/>
    <property type="match status" value="1"/>
</dbReference>
<dbReference type="PROSITE" id="PS00831">
    <property type="entry name" value="RIBOSOMAL_L27"/>
    <property type="match status" value="1"/>
</dbReference>
<sequence length="92" mass="10178">MSKKKGVGSSRNGRDSESKRLGVKRFDGQFVKAGSILVRQRGTKFMPGLNVGRGGDDTLFSKIDGYVKFERKGKNKKAVSVYTEEQFESVAN</sequence>
<keyword id="KW-1185">Reference proteome</keyword>
<keyword id="KW-0687">Ribonucleoprotein</keyword>
<keyword id="KW-0689">Ribosomal protein</keyword>
<gene>
    <name evidence="1" type="primary">rpmA</name>
    <name type="ordered locus">Hore_14110</name>
</gene>
<comment type="similarity">
    <text evidence="1">Belongs to the bacterial ribosomal protein bL27 family.</text>
</comment>
<organism>
    <name type="scientific">Halothermothrix orenii (strain H 168 / OCM 544 / DSM 9562)</name>
    <dbReference type="NCBI Taxonomy" id="373903"/>
    <lineage>
        <taxon>Bacteria</taxon>
        <taxon>Bacillati</taxon>
        <taxon>Bacillota</taxon>
        <taxon>Clostridia</taxon>
        <taxon>Halanaerobiales</taxon>
        <taxon>Halothermotrichaceae</taxon>
        <taxon>Halothermothrix</taxon>
    </lineage>
</organism>
<evidence type="ECO:0000255" key="1">
    <source>
        <dbReference type="HAMAP-Rule" id="MF_00539"/>
    </source>
</evidence>
<evidence type="ECO:0000256" key="2">
    <source>
        <dbReference type="SAM" id="MobiDB-lite"/>
    </source>
</evidence>
<evidence type="ECO:0000305" key="3"/>